<gene>
    <name type="primary">Rps26</name>
</gene>
<evidence type="ECO:0000250" key="1">
    <source>
        <dbReference type="UniProtKB" id="P49171"/>
    </source>
</evidence>
<evidence type="ECO:0000250" key="2">
    <source>
        <dbReference type="UniProtKB" id="P62854"/>
    </source>
</evidence>
<evidence type="ECO:0000256" key="3">
    <source>
        <dbReference type="SAM" id="MobiDB-lite"/>
    </source>
</evidence>
<evidence type="ECO:0000269" key="4">
    <source>
    </source>
</evidence>
<evidence type="ECO:0000305" key="5"/>
<evidence type="ECO:0007744" key="6">
    <source>
        <dbReference type="PDB" id="7CPU"/>
    </source>
</evidence>
<evidence type="ECO:0007744" key="7">
    <source>
        <dbReference type="PDB" id="7CPV"/>
    </source>
</evidence>
<sequence length="115" mass="13015">MTKKRRNNGRAKKGRGHVQPIRCTNCARCVPKDKAIKKFVIRNIVEAAAVRDISEASVFDAYVLPKLYVKLHYCVSCAIHSKVVRNRSREARKDRTPPPRFRPAGAAPRPPPKPM</sequence>
<protein>
    <recommendedName>
        <fullName evidence="5">Small ribosomal subunit protein eS26</fullName>
    </recommendedName>
    <alternativeName>
        <fullName>40S ribosomal protein S26</fullName>
    </alternativeName>
</protein>
<name>RS26_MOUSE</name>
<reference key="1">
    <citation type="submission" date="1996-09" db="EMBL/GenBank/DDBJ databases">
        <authorList>
            <person name="Rocha D."/>
            <person name="Carrier A."/>
            <person name="Victorero G."/>
            <person name="Mattei M.-G."/>
            <person name="Szatanik M."/>
            <person name="Guenet J.-L."/>
            <person name="Jordan B."/>
        </authorList>
    </citation>
    <scope>NUCLEOTIDE SEQUENCE [MRNA]</scope>
    <source>
        <strain>C57BL/6J</strain>
    </source>
</reference>
<reference key="2">
    <citation type="journal article" date="2005" name="Science">
        <title>The transcriptional landscape of the mammalian genome.</title>
        <authorList>
            <person name="Carninci P."/>
            <person name="Kasukawa T."/>
            <person name="Katayama S."/>
            <person name="Gough J."/>
            <person name="Frith M.C."/>
            <person name="Maeda N."/>
            <person name="Oyama R."/>
            <person name="Ravasi T."/>
            <person name="Lenhard B."/>
            <person name="Wells C."/>
            <person name="Kodzius R."/>
            <person name="Shimokawa K."/>
            <person name="Bajic V.B."/>
            <person name="Brenner S.E."/>
            <person name="Batalov S."/>
            <person name="Forrest A.R."/>
            <person name="Zavolan M."/>
            <person name="Davis M.J."/>
            <person name="Wilming L.G."/>
            <person name="Aidinis V."/>
            <person name="Allen J.E."/>
            <person name="Ambesi-Impiombato A."/>
            <person name="Apweiler R."/>
            <person name="Aturaliya R.N."/>
            <person name="Bailey T.L."/>
            <person name="Bansal M."/>
            <person name="Baxter L."/>
            <person name="Beisel K.W."/>
            <person name="Bersano T."/>
            <person name="Bono H."/>
            <person name="Chalk A.M."/>
            <person name="Chiu K.P."/>
            <person name="Choudhary V."/>
            <person name="Christoffels A."/>
            <person name="Clutterbuck D.R."/>
            <person name="Crowe M.L."/>
            <person name="Dalla E."/>
            <person name="Dalrymple B.P."/>
            <person name="de Bono B."/>
            <person name="Della Gatta G."/>
            <person name="di Bernardo D."/>
            <person name="Down T."/>
            <person name="Engstrom P."/>
            <person name="Fagiolini M."/>
            <person name="Faulkner G."/>
            <person name="Fletcher C.F."/>
            <person name="Fukushima T."/>
            <person name="Furuno M."/>
            <person name="Futaki S."/>
            <person name="Gariboldi M."/>
            <person name="Georgii-Hemming P."/>
            <person name="Gingeras T.R."/>
            <person name="Gojobori T."/>
            <person name="Green R.E."/>
            <person name="Gustincich S."/>
            <person name="Harbers M."/>
            <person name="Hayashi Y."/>
            <person name="Hensch T.K."/>
            <person name="Hirokawa N."/>
            <person name="Hill D."/>
            <person name="Huminiecki L."/>
            <person name="Iacono M."/>
            <person name="Ikeo K."/>
            <person name="Iwama A."/>
            <person name="Ishikawa T."/>
            <person name="Jakt M."/>
            <person name="Kanapin A."/>
            <person name="Katoh M."/>
            <person name="Kawasawa Y."/>
            <person name="Kelso J."/>
            <person name="Kitamura H."/>
            <person name="Kitano H."/>
            <person name="Kollias G."/>
            <person name="Krishnan S.P."/>
            <person name="Kruger A."/>
            <person name="Kummerfeld S.K."/>
            <person name="Kurochkin I.V."/>
            <person name="Lareau L.F."/>
            <person name="Lazarevic D."/>
            <person name="Lipovich L."/>
            <person name="Liu J."/>
            <person name="Liuni S."/>
            <person name="McWilliam S."/>
            <person name="Madan Babu M."/>
            <person name="Madera M."/>
            <person name="Marchionni L."/>
            <person name="Matsuda H."/>
            <person name="Matsuzawa S."/>
            <person name="Miki H."/>
            <person name="Mignone F."/>
            <person name="Miyake S."/>
            <person name="Morris K."/>
            <person name="Mottagui-Tabar S."/>
            <person name="Mulder N."/>
            <person name="Nakano N."/>
            <person name="Nakauchi H."/>
            <person name="Ng P."/>
            <person name="Nilsson R."/>
            <person name="Nishiguchi S."/>
            <person name="Nishikawa S."/>
            <person name="Nori F."/>
            <person name="Ohara O."/>
            <person name="Okazaki Y."/>
            <person name="Orlando V."/>
            <person name="Pang K.C."/>
            <person name="Pavan W.J."/>
            <person name="Pavesi G."/>
            <person name="Pesole G."/>
            <person name="Petrovsky N."/>
            <person name="Piazza S."/>
            <person name="Reed J."/>
            <person name="Reid J.F."/>
            <person name="Ring B.Z."/>
            <person name="Ringwald M."/>
            <person name="Rost B."/>
            <person name="Ruan Y."/>
            <person name="Salzberg S.L."/>
            <person name="Sandelin A."/>
            <person name="Schneider C."/>
            <person name="Schoenbach C."/>
            <person name="Sekiguchi K."/>
            <person name="Semple C.A."/>
            <person name="Seno S."/>
            <person name="Sessa L."/>
            <person name="Sheng Y."/>
            <person name="Shibata Y."/>
            <person name="Shimada H."/>
            <person name="Shimada K."/>
            <person name="Silva D."/>
            <person name="Sinclair B."/>
            <person name="Sperling S."/>
            <person name="Stupka E."/>
            <person name="Sugiura K."/>
            <person name="Sultana R."/>
            <person name="Takenaka Y."/>
            <person name="Taki K."/>
            <person name="Tammoja K."/>
            <person name="Tan S.L."/>
            <person name="Tang S."/>
            <person name="Taylor M.S."/>
            <person name="Tegner J."/>
            <person name="Teichmann S.A."/>
            <person name="Ueda H.R."/>
            <person name="van Nimwegen E."/>
            <person name="Verardo R."/>
            <person name="Wei C.L."/>
            <person name="Yagi K."/>
            <person name="Yamanishi H."/>
            <person name="Zabarovsky E."/>
            <person name="Zhu S."/>
            <person name="Zimmer A."/>
            <person name="Hide W."/>
            <person name="Bult C."/>
            <person name="Grimmond S.M."/>
            <person name="Teasdale R.D."/>
            <person name="Liu E.T."/>
            <person name="Brusic V."/>
            <person name="Quackenbush J."/>
            <person name="Wahlestedt C."/>
            <person name="Mattick J.S."/>
            <person name="Hume D.A."/>
            <person name="Kai C."/>
            <person name="Sasaki D."/>
            <person name="Tomaru Y."/>
            <person name="Fukuda S."/>
            <person name="Kanamori-Katayama M."/>
            <person name="Suzuki M."/>
            <person name="Aoki J."/>
            <person name="Arakawa T."/>
            <person name="Iida J."/>
            <person name="Imamura K."/>
            <person name="Itoh M."/>
            <person name="Kato T."/>
            <person name="Kawaji H."/>
            <person name="Kawagashira N."/>
            <person name="Kawashima T."/>
            <person name="Kojima M."/>
            <person name="Kondo S."/>
            <person name="Konno H."/>
            <person name="Nakano K."/>
            <person name="Ninomiya N."/>
            <person name="Nishio T."/>
            <person name="Okada M."/>
            <person name="Plessy C."/>
            <person name="Shibata K."/>
            <person name="Shiraki T."/>
            <person name="Suzuki S."/>
            <person name="Tagami M."/>
            <person name="Waki K."/>
            <person name="Watahiki A."/>
            <person name="Okamura-Oho Y."/>
            <person name="Suzuki H."/>
            <person name="Kawai J."/>
            <person name="Hayashizaki Y."/>
        </authorList>
    </citation>
    <scope>NUCLEOTIDE SEQUENCE [LARGE SCALE MRNA]</scope>
    <source>
        <strain>C57BL/6J</strain>
        <tissue>Kidney</tissue>
        <tissue>Small intestine</tissue>
    </source>
</reference>
<reference key="3">
    <citation type="journal article" date="2004" name="Genome Res.">
        <title>The status, quality, and expansion of the NIH full-length cDNA project: the Mammalian Gene Collection (MGC).</title>
        <authorList>
            <consortium name="The MGC Project Team"/>
        </authorList>
    </citation>
    <scope>NUCLEOTIDE SEQUENCE [LARGE SCALE MRNA]</scope>
    <source>
        <strain>C57BL/6J</strain>
        <strain>FVB/N</strain>
        <tissue>Brain</tissue>
        <tissue>Colon</tissue>
    </source>
</reference>
<reference key="4">
    <citation type="journal article" date="2010" name="Cell">
        <title>A tissue-specific atlas of mouse protein phosphorylation and expression.</title>
        <authorList>
            <person name="Huttlin E.L."/>
            <person name="Jedrychowski M.P."/>
            <person name="Elias J.E."/>
            <person name="Goswami T."/>
            <person name="Rad R."/>
            <person name="Beausoleil S.A."/>
            <person name="Villen J."/>
            <person name="Haas W."/>
            <person name="Sowa M.E."/>
            <person name="Gygi S.P."/>
        </authorList>
    </citation>
    <scope>IDENTIFICATION BY MASS SPECTROMETRY [LARGE SCALE ANALYSIS]</scope>
    <source>
        <tissue>Brain</tissue>
        <tissue>Brown adipose tissue</tissue>
        <tissue>Heart</tissue>
        <tissue>Kidney</tissue>
        <tissue>Liver</tissue>
        <tissue>Lung</tissue>
        <tissue>Pancreas</tissue>
        <tissue>Spleen</tissue>
        <tissue>Testis</tissue>
    </source>
</reference>
<reference evidence="6 7" key="5">
    <citation type="journal article" date="2022" name="Nature">
        <title>A male germ-cell-specific ribosome controls male fertility.</title>
        <authorList>
            <person name="Li H."/>
            <person name="Huo Y."/>
            <person name="He X."/>
            <person name="Yao L."/>
            <person name="Zhang H."/>
            <person name="Cui Y."/>
            <person name="Xiao H."/>
            <person name="Xie W."/>
            <person name="Zhang D."/>
            <person name="Wang Y."/>
            <person name="Zhang S."/>
            <person name="Tu H."/>
            <person name="Cheng Y."/>
            <person name="Guo Y."/>
            <person name="Cao X."/>
            <person name="Zhu Y."/>
            <person name="Jiang T."/>
            <person name="Guo X."/>
            <person name="Qin Y."/>
            <person name="Sha J."/>
        </authorList>
    </citation>
    <scope>STRUCTURE BY ELECTRON MICROSCOPY (3.03 ANGSTROMS) OF RIBOSOME</scope>
    <scope>FUNCTION</scope>
    <scope>SUBUNIT</scope>
    <scope>SUBCELLULAR LOCATION</scope>
</reference>
<organism>
    <name type="scientific">Mus musculus</name>
    <name type="common">Mouse</name>
    <dbReference type="NCBI Taxonomy" id="10090"/>
    <lineage>
        <taxon>Eukaryota</taxon>
        <taxon>Metazoa</taxon>
        <taxon>Chordata</taxon>
        <taxon>Craniata</taxon>
        <taxon>Vertebrata</taxon>
        <taxon>Euteleostomi</taxon>
        <taxon>Mammalia</taxon>
        <taxon>Eutheria</taxon>
        <taxon>Euarchontoglires</taxon>
        <taxon>Glires</taxon>
        <taxon>Rodentia</taxon>
        <taxon>Myomorpha</taxon>
        <taxon>Muroidea</taxon>
        <taxon>Muridae</taxon>
        <taxon>Murinae</taxon>
        <taxon>Mus</taxon>
        <taxon>Mus</taxon>
    </lineage>
</organism>
<feature type="chain" id="PRO_0000204511" description="Small ribosomal subunit protein eS26">
    <location>
        <begin position="1"/>
        <end position="115"/>
    </location>
</feature>
<feature type="region of interest" description="Disordered" evidence="3">
    <location>
        <begin position="85"/>
        <end position="115"/>
    </location>
</feature>
<feature type="compositionally biased region" description="Basic and acidic residues" evidence="3">
    <location>
        <begin position="87"/>
        <end position="97"/>
    </location>
</feature>
<feature type="modified residue" description="Phosphoserine" evidence="2">
    <location>
        <position position="54"/>
    </location>
</feature>
<feature type="sequence conflict" description="In Ref. 1; AAB07729." evidence="5" ref="1">
    <original>H</original>
    <variation>N</variation>
    <location>
        <position position="17"/>
    </location>
</feature>
<proteinExistence type="evidence at protein level"/>
<keyword id="KW-0002">3D-structure</keyword>
<keyword id="KW-0963">Cytoplasm</keyword>
<keyword id="KW-0256">Endoplasmic reticulum</keyword>
<keyword id="KW-0597">Phosphoprotein</keyword>
<keyword id="KW-1185">Reference proteome</keyword>
<keyword id="KW-0687">Ribonucleoprotein</keyword>
<keyword id="KW-0689">Ribosomal protein</keyword>
<accession>P62855</accession>
<accession>P02383</accession>
<accession>P70394</accession>
<accession>Q06722</accession>
<comment type="function">
    <text evidence="4">Component of the small ribosomal subunit (PubMed:36517592). The ribosome is a large ribonucleoprotein complex responsible for the synthesis of proteins in the cell (PubMed:36517592).</text>
</comment>
<comment type="subunit">
    <text evidence="4">Component of the small ribosomal subunit.</text>
</comment>
<comment type="subcellular location">
    <subcellularLocation>
        <location evidence="2">Cytoplasm</location>
        <location evidence="2">Cytosol</location>
    </subcellularLocation>
    <subcellularLocation>
        <location evidence="4">Cytoplasm</location>
    </subcellularLocation>
    <subcellularLocation>
        <location evidence="1">Rough endoplasmic reticulum</location>
    </subcellularLocation>
    <text evidence="1 2">Detected on cytosolic polysomes (By similarity). Detected in ribosomes that are associated with the rough endoplasmic reticulum (By similarity).</text>
</comment>
<comment type="similarity">
    <text evidence="5">Belongs to the eukaryotic ribosomal protein eS26 family.</text>
</comment>
<dbReference type="EMBL" id="U67770">
    <property type="protein sequence ID" value="AAB07729.1"/>
    <property type="molecule type" value="mRNA"/>
</dbReference>
<dbReference type="EMBL" id="AK008301">
    <property type="protein sequence ID" value="BAB25586.1"/>
    <property type="molecule type" value="mRNA"/>
</dbReference>
<dbReference type="EMBL" id="AK010689">
    <property type="protein sequence ID" value="BAB27121.1"/>
    <property type="molecule type" value="mRNA"/>
</dbReference>
<dbReference type="EMBL" id="AK012722">
    <property type="protein sequence ID" value="BAB28433.1"/>
    <property type="molecule type" value="mRNA"/>
</dbReference>
<dbReference type="EMBL" id="AK018702">
    <property type="protein sequence ID" value="BAB31353.1"/>
    <property type="molecule type" value="mRNA"/>
</dbReference>
<dbReference type="EMBL" id="BC036987">
    <property type="protein sequence ID" value="AAH36987.1"/>
    <property type="molecule type" value="mRNA"/>
</dbReference>
<dbReference type="EMBL" id="BC081452">
    <property type="protein sequence ID" value="AAH81452.1"/>
    <property type="molecule type" value="mRNA"/>
</dbReference>
<dbReference type="CCDS" id="CCDS36090.1"/>
<dbReference type="RefSeq" id="NP_038793.2">
    <property type="nucleotide sequence ID" value="NM_013765.2"/>
</dbReference>
<dbReference type="PDB" id="7CPU">
    <property type="method" value="EM"/>
    <property type="resolution" value="2.82 A"/>
    <property type="chains" value="Sa=1-115"/>
</dbReference>
<dbReference type="PDB" id="7CPV">
    <property type="method" value="EM"/>
    <property type="resolution" value="3.03 A"/>
    <property type="chains" value="Sa=1-115"/>
</dbReference>
<dbReference type="PDB" id="7LS1">
    <property type="method" value="EM"/>
    <property type="resolution" value="3.30 A"/>
    <property type="chains" value="F3=1-115"/>
</dbReference>
<dbReference type="PDB" id="7LS2">
    <property type="method" value="EM"/>
    <property type="resolution" value="3.10 A"/>
    <property type="chains" value="F3=1-115"/>
</dbReference>
<dbReference type="PDBsum" id="7CPU"/>
<dbReference type="PDBsum" id="7CPV"/>
<dbReference type="PDBsum" id="7LS1"/>
<dbReference type="PDBsum" id="7LS2"/>
<dbReference type="EMDB" id="EMD-23500"/>
<dbReference type="EMDB" id="EMD-23501"/>
<dbReference type="EMDB" id="EMD-30432"/>
<dbReference type="EMDB" id="EMD-30433"/>
<dbReference type="SMR" id="P62855"/>
<dbReference type="BioGRID" id="205177">
    <property type="interactions" value="73"/>
</dbReference>
<dbReference type="ComplexPortal" id="CPX-5261">
    <property type="entry name" value="40S cytosolic small ribosomal subunit"/>
</dbReference>
<dbReference type="FunCoup" id="P62855">
    <property type="interactions" value="1515"/>
</dbReference>
<dbReference type="IntAct" id="P62855">
    <property type="interactions" value="8"/>
</dbReference>
<dbReference type="MINT" id="P62855"/>
<dbReference type="STRING" id="10090.ENSMUSP00000026420"/>
<dbReference type="GlyGen" id="P62855">
    <property type="glycosylation" value="2 sites, 1 N-linked glycan (1 site), 1 O-linked glycan (1 site)"/>
</dbReference>
<dbReference type="iPTMnet" id="P62855"/>
<dbReference type="PhosphoSitePlus" id="P62855"/>
<dbReference type="SwissPalm" id="P62855"/>
<dbReference type="jPOST" id="P62855"/>
<dbReference type="PaxDb" id="10090-ENSMUSP00000026420"/>
<dbReference type="PeptideAtlas" id="P62855"/>
<dbReference type="ProteomicsDB" id="261003"/>
<dbReference type="Pumba" id="P62855"/>
<dbReference type="DNASU" id="27370"/>
<dbReference type="Ensembl" id="ENSMUST00000026420.7">
    <property type="protein sequence ID" value="ENSMUSP00000026420.6"/>
    <property type="gene ID" value="ENSMUSG00000025362.7"/>
</dbReference>
<dbReference type="GeneID" id="27370"/>
<dbReference type="KEGG" id="mmu:27370"/>
<dbReference type="UCSC" id="uc007hno.2">
    <property type="organism name" value="mouse"/>
</dbReference>
<dbReference type="AGR" id="MGI:1351628"/>
<dbReference type="CTD" id="6231"/>
<dbReference type="MGI" id="MGI:1351628">
    <property type="gene designation" value="Rps26"/>
</dbReference>
<dbReference type="VEuPathDB" id="HostDB:ENSMUSG00000025362"/>
<dbReference type="eggNOG" id="KOG1768">
    <property type="taxonomic scope" value="Eukaryota"/>
</dbReference>
<dbReference type="GeneTree" id="ENSGT00390000002517"/>
<dbReference type="HOGENOM" id="CLU_129451_0_1_1"/>
<dbReference type="InParanoid" id="P62855"/>
<dbReference type="OMA" id="KCYCVSC"/>
<dbReference type="OrthoDB" id="10262653at2759"/>
<dbReference type="PhylomeDB" id="P62855"/>
<dbReference type="TreeFam" id="TF300234"/>
<dbReference type="Reactome" id="R-MMU-156827">
    <property type="pathway name" value="L13a-mediated translational silencing of Ceruloplasmin expression"/>
</dbReference>
<dbReference type="Reactome" id="R-MMU-1799339">
    <property type="pathway name" value="SRP-dependent cotranslational protein targeting to membrane"/>
</dbReference>
<dbReference type="Reactome" id="R-MMU-6791226">
    <property type="pathway name" value="Major pathway of rRNA processing in the nucleolus and cytosol"/>
</dbReference>
<dbReference type="Reactome" id="R-MMU-72649">
    <property type="pathway name" value="Translation initiation complex formation"/>
</dbReference>
<dbReference type="Reactome" id="R-MMU-72689">
    <property type="pathway name" value="Formation of a pool of free 40S subunits"/>
</dbReference>
<dbReference type="Reactome" id="R-MMU-72695">
    <property type="pathway name" value="Formation of the ternary complex, and subsequently, the 43S complex"/>
</dbReference>
<dbReference type="Reactome" id="R-MMU-72702">
    <property type="pathway name" value="Ribosomal scanning and start codon recognition"/>
</dbReference>
<dbReference type="Reactome" id="R-MMU-72706">
    <property type="pathway name" value="GTP hydrolysis and joining of the 60S ribosomal subunit"/>
</dbReference>
<dbReference type="Reactome" id="R-MMU-975956">
    <property type="pathway name" value="Nonsense Mediated Decay (NMD) independent of the Exon Junction Complex (EJC)"/>
</dbReference>
<dbReference type="Reactome" id="R-MMU-975957">
    <property type="pathway name" value="Nonsense Mediated Decay (NMD) enhanced by the Exon Junction Complex (EJC)"/>
</dbReference>
<dbReference type="BioGRID-ORCS" id="27370">
    <property type="hits" value="29 hits in 75 CRISPR screens"/>
</dbReference>
<dbReference type="CD-CODE" id="CE726F99">
    <property type="entry name" value="Postsynaptic density"/>
</dbReference>
<dbReference type="ChiTaRS" id="Rps26">
    <property type="organism name" value="mouse"/>
</dbReference>
<dbReference type="PRO" id="PR:P62855"/>
<dbReference type="Proteomes" id="UP000000589">
    <property type="component" value="Chromosome 10"/>
</dbReference>
<dbReference type="RNAct" id="P62855">
    <property type="molecule type" value="protein"/>
</dbReference>
<dbReference type="Bgee" id="ENSMUSG00000025362">
    <property type="expression patterns" value="Expressed in epiblast (generic) and 66 other cell types or tissues"/>
</dbReference>
<dbReference type="ExpressionAtlas" id="P62855">
    <property type="expression patterns" value="baseline and differential"/>
</dbReference>
<dbReference type="GO" id="GO:0005737">
    <property type="term" value="C:cytoplasm"/>
    <property type="evidence" value="ECO:0000303"/>
    <property type="project" value="ComplexPortal"/>
</dbReference>
<dbReference type="GO" id="GO:0098556">
    <property type="term" value="C:cytoplasmic side of rough endoplasmic reticulum membrane"/>
    <property type="evidence" value="ECO:0000250"/>
    <property type="project" value="UniProtKB"/>
</dbReference>
<dbReference type="GO" id="GO:0005829">
    <property type="term" value="C:cytosol"/>
    <property type="evidence" value="ECO:0000304"/>
    <property type="project" value="Reactome"/>
</dbReference>
<dbReference type="GO" id="GO:0022627">
    <property type="term" value="C:cytosolic small ribosomal subunit"/>
    <property type="evidence" value="ECO:0000314"/>
    <property type="project" value="UniProtKB"/>
</dbReference>
<dbReference type="GO" id="GO:0098794">
    <property type="term" value="C:postsynapse"/>
    <property type="evidence" value="ECO:0000303"/>
    <property type="project" value="SynGO"/>
</dbReference>
<dbReference type="GO" id="GO:0098793">
    <property type="term" value="C:presynapse"/>
    <property type="evidence" value="ECO:0000303"/>
    <property type="project" value="SynGO"/>
</dbReference>
<dbReference type="GO" id="GO:0005840">
    <property type="term" value="C:ribosome"/>
    <property type="evidence" value="ECO:0000250"/>
    <property type="project" value="UniProtKB"/>
</dbReference>
<dbReference type="GO" id="GO:0045202">
    <property type="term" value="C:synapse"/>
    <property type="evidence" value="ECO:0000314"/>
    <property type="project" value="SynGO"/>
</dbReference>
<dbReference type="GO" id="GO:0003729">
    <property type="term" value="F:mRNA binding"/>
    <property type="evidence" value="ECO:0007669"/>
    <property type="project" value="Ensembl"/>
</dbReference>
<dbReference type="GO" id="GO:0003735">
    <property type="term" value="F:structural constituent of ribosome"/>
    <property type="evidence" value="ECO:0000314"/>
    <property type="project" value="UniProtKB"/>
</dbReference>
<dbReference type="GO" id="GO:0002181">
    <property type="term" value="P:cytoplasmic translation"/>
    <property type="evidence" value="ECO:0000250"/>
    <property type="project" value="UniProtKB"/>
</dbReference>
<dbReference type="GO" id="GO:0033119">
    <property type="term" value="P:negative regulation of RNA splicing"/>
    <property type="evidence" value="ECO:0007669"/>
    <property type="project" value="Ensembl"/>
</dbReference>
<dbReference type="GO" id="GO:0140242">
    <property type="term" value="P:translation at postsynapse"/>
    <property type="evidence" value="ECO:0000303"/>
    <property type="project" value="SynGO"/>
</dbReference>
<dbReference type="GO" id="GO:0140236">
    <property type="term" value="P:translation at presynapse"/>
    <property type="evidence" value="ECO:0000303"/>
    <property type="project" value="SynGO"/>
</dbReference>
<dbReference type="FunFam" id="3.30.1740.20:FF:000001">
    <property type="entry name" value="40S ribosomal protein S26"/>
    <property type="match status" value="1"/>
</dbReference>
<dbReference type="Gene3D" id="3.30.1740.20">
    <property type="entry name" value="Ribosomal protein S26e"/>
    <property type="match status" value="1"/>
</dbReference>
<dbReference type="InterPro" id="IPR000892">
    <property type="entry name" value="Ribosomal_eS26"/>
</dbReference>
<dbReference type="InterPro" id="IPR047864">
    <property type="entry name" value="Ribosomal_eS26_CS"/>
</dbReference>
<dbReference type="InterPro" id="IPR038551">
    <property type="entry name" value="Ribosomal_eS26_sf"/>
</dbReference>
<dbReference type="PANTHER" id="PTHR12538">
    <property type="entry name" value="40S RIBOSOMAL PROTEIN S26"/>
    <property type="match status" value="1"/>
</dbReference>
<dbReference type="PANTHER" id="PTHR12538:SF7">
    <property type="entry name" value="SMALL RIBOSOMAL SUBUNIT PROTEIN ES26-RELATED"/>
    <property type="match status" value="1"/>
</dbReference>
<dbReference type="Pfam" id="PF01283">
    <property type="entry name" value="Ribosomal_S26e"/>
    <property type="match status" value="1"/>
</dbReference>
<dbReference type="PROSITE" id="PS00733">
    <property type="entry name" value="RIBOSOMAL_S26E"/>
    <property type="match status" value="1"/>
</dbReference>